<evidence type="ECO:0000255" key="1">
    <source>
        <dbReference type="PROSITE-ProRule" id="PRU00520"/>
    </source>
</evidence>
<evidence type="ECO:0000305" key="2"/>
<sequence>MKRVHVLVAGRVQGVWYRASAARKASELGLTGWVRNLPDGRVELVAEGDAESVDALLAWCRRGPPLARVTGLDVREMAVTGEFTEFAVLRDV</sequence>
<accession>Q60AX4</accession>
<reference key="1">
    <citation type="journal article" date="2004" name="PLoS Biol.">
        <title>Genomic insights into methanotrophy: the complete genome sequence of Methylococcus capsulatus (Bath).</title>
        <authorList>
            <person name="Ward N.L."/>
            <person name="Larsen O."/>
            <person name="Sakwa J."/>
            <person name="Bruseth L."/>
            <person name="Khouri H.M."/>
            <person name="Durkin A.S."/>
            <person name="Dimitrov G."/>
            <person name="Jiang L."/>
            <person name="Scanlan D."/>
            <person name="Kang K.H."/>
            <person name="Lewis M.R."/>
            <person name="Nelson K.E."/>
            <person name="Methe B.A."/>
            <person name="Wu M."/>
            <person name="Heidelberg J.F."/>
            <person name="Paulsen I.T."/>
            <person name="Fouts D.E."/>
            <person name="Ravel J."/>
            <person name="Tettelin H."/>
            <person name="Ren Q."/>
            <person name="Read T.D."/>
            <person name="DeBoy R.T."/>
            <person name="Seshadri R."/>
            <person name="Salzberg S.L."/>
            <person name="Jensen H.B."/>
            <person name="Birkeland N.K."/>
            <person name="Nelson W.C."/>
            <person name="Dodson R.J."/>
            <person name="Grindhaug S.H."/>
            <person name="Holt I.E."/>
            <person name="Eidhammer I."/>
            <person name="Jonasen I."/>
            <person name="Vanaken S."/>
            <person name="Utterback T.R."/>
            <person name="Feldblyum T.V."/>
            <person name="Fraser C.M."/>
            <person name="Lillehaug J.R."/>
            <person name="Eisen J.A."/>
        </authorList>
    </citation>
    <scope>NUCLEOTIDE SEQUENCE [LARGE SCALE GENOMIC DNA]</scope>
    <source>
        <strain>ATCC 33009 / NCIMB 11132 / Bath</strain>
    </source>
</reference>
<feature type="chain" id="PRO_0000326745" description="Acylphosphatase">
    <location>
        <begin position="1"/>
        <end position="92"/>
    </location>
</feature>
<feature type="domain" description="Acylphosphatase-like" evidence="1">
    <location>
        <begin position="3"/>
        <end position="90"/>
    </location>
</feature>
<feature type="active site" evidence="1">
    <location>
        <position position="18"/>
    </location>
</feature>
<feature type="active site" evidence="1">
    <location>
        <position position="36"/>
    </location>
</feature>
<protein>
    <recommendedName>
        <fullName>Acylphosphatase</fullName>
        <ecNumber>3.6.1.7</ecNumber>
    </recommendedName>
    <alternativeName>
        <fullName>Acylphosphate phosphohydrolase</fullName>
    </alternativeName>
</protein>
<name>ACYP_METCA</name>
<comment type="catalytic activity">
    <reaction>
        <text>an acyl phosphate + H2O = a carboxylate + phosphate + H(+)</text>
        <dbReference type="Rhea" id="RHEA:14965"/>
        <dbReference type="ChEBI" id="CHEBI:15377"/>
        <dbReference type="ChEBI" id="CHEBI:15378"/>
        <dbReference type="ChEBI" id="CHEBI:29067"/>
        <dbReference type="ChEBI" id="CHEBI:43474"/>
        <dbReference type="ChEBI" id="CHEBI:59918"/>
        <dbReference type="EC" id="3.6.1.7"/>
    </reaction>
</comment>
<comment type="similarity">
    <text evidence="2">Belongs to the acylphosphatase family.</text>
</comment>
<keyword id="KW-0378">Hydrolase</keyword>
<keyword id="KW-1185">Reference proteome</keyword>
<dbReference type="EC" id="3.6.1.7"/>
<dbReference type="EMBL" id="AE017282">
    <property type="protein sequence ID" value="AAU93141.1"/>
    <property type="molecule type" value="Genomic_DNA"/>
</dbReference>
<dbReference type="RefSeq" id="WP_010960051.1">
    <property type="nucleotide sequence ID" value="NC_002977.6"/>
</dbReference>
<dbReference type="SMR" id="Q60AX4"/>
<dbReference type="STRING" id="243233.MCA0713"/>
<dbReference type="GeneID" id="88223033"/>
<dbReference type="KEGG" id="mca:MCA0713"/>
<dbReference type="eggNOG" id="COG1254">
    <property type="taxonomic scope" value="Bacteria"/>
</dbReference>
<dbReference type="HOGENOM" id="CLU_141932_1_0_6"/>
<dbReference type="Proteomes" id="UP000006821">
    <property type="component" value="Chromosome"/>
</dbReference>
<dbReference type="GO" id="GO:0003998">
    <property type="term" value="F:acylphosphatase activity"/>
    <property type="evidence" value="ECO:0007669"/>
    <property type="project" value="UniProtKB-EC"/>
</dbReference>
<dbReference type="Gene3D" id="3.30.70.100">
    <property type="match status" value="1"/>
</dbReference>
<dbReference type="InterPro" id="IPR020456">
    <property type="entry name" value="Acylphosphatase"/>
</dbReference>
<dbReference type="InterPro" id="IPR001792">
    <property type="entry name" value="Acylphosphatase-like_dom"/>
</dbReference>
<dbReference type="InterPro" id="IPR036046">
    <property type="entry name" value="Acylphosphatase-like_dom_sf"/>
</dbReference>
<dbReference type="InterPro" id="IPR017968">
    <property type="entry name" value="Acylphosphatase_CS"/>
</dbReference>
<dbReference type="PANTHER" id="PTHR47268">
    <property type="entry name" value="ACYLPHOSPHATASE"/>
    <property type="match status" value="1"/>
</dbReference>
<dbReference type="PANTHER" id="PTHR47268:SF4">
    <property type="entry name" value="ACYLPHOSPHATASE"/>
    <property type="match status" value="1"/>
</dbReference>
<dbReference type="Pfam" id="PF00708">
    <property type="entry name" value="Acylphosphatase"/>
    <property type="match status" value="1"/>
</dbReference>
<dbReference type="PRINTS" id="PR00112">
    <property type="entry name" value="ACYLPHPHTASE"/>
</dbReference>
<dbReference type="SUPFAM" id="SSF54975">
    <property type="entry name" value="Acylphosphatase/BLUF domain-like"/>
    <property type="match status" value="1"/>
</dbReference>
<dbReference type="PROSITE" id="PS00151">
    <property type="entry name" value="ACYLPHOSPHATASE_2"/>
    <property type="match status" value="1"/>
</dbReference>
<dbReference type="PROSITE" id="PS51160">
    <property type="entry name" value="ACYLPHOSPHATASE_3"/>
    <property type="match status" value="1"/>
</dbReference>
<proteinExistence type="inferred from homology"/>
<gene>
    <name type="primary">acyP</name>
    <name type="ordered locus">MCA0713</name>
</gene>
<organism>
    <name type="scientific">Methylococcus capsulatus (strain ATCC 33009 / NCIMB 11132 / Bath)</name>
    <dbReference type="NCBI Taxonomy" id="243233"/>
    <lineage>
        <taxon>Bacteria</taxon>
        <taxon>Pseudomonadati</taxon>
        <taxon>Pseudomonadota</taxon>
        <taxon>Gammaproteobacteria</taxon>
        <taxon>Methylococcales</taxon>
        <taxon>Methylococcaceae</taxon>
        <taxon>Methylococcus</taxon>
    </lineage>
</organism>